<name>RL10_CHLTB</name>
<accession>B0BBU8</accession>
<evidence type="ECO:0000255" key="1">
    <source>
        <dbReference type="HAMAP-Rule" id="MF_00362"/>
    </source>
</evidence>
<evidence type="ECO:0000305" key="2"/>
<organism>
    <name type="scientific">Chlamydia trachomatis serovar L2b (strain UCH-1/proctitis)</name>
    <dbReference type="NCBI Taxonomy" id="471473"/>
    <lineage>
        <taxon>Bacteria</taxon>
        <taxon>Pseudomonadati</taxon>
        <taxon>Chlamydiota</taxon>
        <taxon>Chlamydiia</taxon>
        <taxon>Chlamydiales</taxon>
        <taxon>Chlamydiaceae</taxon>
        <taxon>Chlamydia/Chlamydophila group</taxon>
        <taxon>Chlamydia</taxon>
    </lineage>
</organism>
<reference key="1">
    <citation type="journal article" date="2008" name="Genome Res.">
        <title>Chlamydia trachomatis: genome sequence analysis of lymphogranuloma venereum isolates.</title>
        <authorList>
            <person name="Thomson N.R."/>
            <person name="Holden M.T.G."/>
            <person name="Carder C."/>
            <person name="Lennard N."/>
            <person name="Lockey S.J."/>
            <person name="Marsh P."/>
            <person name="Skipp P."/>
            <person name="O'Connor C.D."/>
            <person name="Goodhead I."/>
            <person name="Norbertzcak H."/>
            <person name="Harris B."/>
            <person name="Ormond D."/>
            <person name="Rance R."/>
            <person name="Quail M.A."/>
            <person name="Parkhill J."/>
            <person name="Stephens R.S."/>
            <person name="Clarke I.N."/>
        </authorList>
    </citation>
    <scope>NUCLEOTIDE SEQUENCE [LARGE SCALE GENOMIC DNA]</scope>
    <source>
        <strain>UCH-1/proctitis</strain>
    </source>
</reference>
<sequence>MKEEKKLLLREVEEKITASQGFILLRYLGFTATHSRSFRNNLSGVSAEFEVLKKKIFFKALETSGVEMDPEDSEGHLGVVFAYGDPVSAAKQVLDFNKQHNDSLVFLAGRIDNASLSGREVEAVAKLPSMKELRQQVVGLIAAPMSQVVGIMNSVLSGVVSCVDQKAEKTQE</sequence>
<keyword id="KW-0687">Ribonucleoprotein</keyword>
<keyword id="KW-0689">Ribosomal protein</keyword>
<keyword id="KW-0694">RNA-binding</keyword>
<keyword id="KW-0699">rRNA-binding</keyword>
<proteinExistence type="inferred from homology"/>
<protein>
    <recommendedName>
        <fullName evidence="1">Large ribosomal subunit protein uL10</fullName>
    </recommendedName>
    <alternativeName>
        <fullName evidence="2">50S ribosomal protein L10</fullName>
    </alternativeName>
</protein>
<gene>
    <name evidence="1" type="primary">rplJ</name>
    <name type="ordered locus">CTLon_0565</name>
</gene>
<feature type="chain" id="PRO_1000120937" description="Large ribosomal subunit protein uL10">
    <location>
        <begin position="1"/>
        <end position="172"/>
    </location>
</feature>
<dbReference type="EMBL" id="AM884177">
    <property type="protein sequence ID" value="CAP06963.1"/>
    <property type="molecule type" value="Genomic_DNA"/>
</dbReference>
<dbReference type="RefSeq" id="WP_009873721.1">
    <property type="nucleotide sequence ID" value="NC_010280.2"/>
</dbReference>
<dbReference type="SMR" id="B0BBU8"/>
<dbReference type="KEGG" id="ctl:CTLon_0565"/>
<dbReference type="HOGENOM" id="CLU_092227_1_2_0"/>
<dbReference type="Proteomes" id="UP001154401">
    <property type="component" value="Chromosome"/>
</dbReference>
<dbReference type="GO" id="GO:0015934">
    <property type="term" value="C:large ribosomal subunit"/>
    <property type="evidence" value="ECO:0007669"/>
    <property type="project" value="InterPro"/>
</dbReference>
<dbReference type="GO" id="GO:0070180">
    <property type="term" value="F:large ribosomal subunit rRNA binding"/>
    <property type="evidence" value="ECO:0007669"/>
    <property type="project" value="UniProtKB-UniRule"/>
</dbReference>
<dbReference type="GO" id="GO:0003735">
    <property type="term" value="F:structural constituent of ribosome"/>
    <property type="evidence" value="ECO:0007669"/>
    <property type="project" value="InterPro"/>
</dbReference>
<dbReference type="GO" id="GO:0006412">
    <property type="term" value="P:translation"/>
    <property type="evidence" value="ECO:0007669"/>
    <property type="project" value="UniProtKB-UniRule"/>
</dbReference>
<dbReference type="CDD" id="cd05797">
    <property type="entry name" value="Ribosomal_L10"/>
    <property type="match status" value="1"/>
</dbReference>
<dbReference type="FunFam" id="3.30.70.1730:FF:000018">
    <property type="entry name" value="50S ribosomal protein L10"/>
    <property type="match status" value="1"/>
</dbReference>
<dbReference type="Gene3D" id="3.30.70.1730">
    <property type="match status" value="1"/>
</dbReference>
<dbReference type="Gene3D" id="6.10.250.290">
    <property type="match status" value="1"/>
</dbReference>
<dbReference type="HAMAP" id="MF_00362">
    <property type="entry name" value="Ribosomal_uL10"/>
    <property type="match status" value="1"/>
</dbReference>
<dbReference type="InterPro" id="IPR001790">
    <property type="entry name" value="Ribosomal_uL10"/>
</dbReference>
<dbReference type="InterPro" id="IPR043141">
    <property type="entry name" value="Ribosomal_uL10-like_sf"/>
</dbReference>
<dbReference type="InterPro" id="IPR022973">
    <property type="entry name" value="Ribosomal_uL10_bac"/>
</dbReference>
<dbReference type="InterPro" id="IPR047865">
    <property type="entry name" value="Ribosomal_uL10_bac_type"/>
</dbReference>
<dbReference type="InterPro" id="IPR002363">
    <property type="entry name" value="Ribosomal_uL10_CS_bac"/>
</dbReference>
<dbReference type="NCBIfam" id="NF000955">
    <property type="entry name" value="PRK00099.1-1"/>
    <property type="match status" value="1"/>
</dbReference>
<dbReference type="PANTHER" id="PTHR11560">
    <property type="entry name" value="39S RIBOSOMAL PROTEIN L10, MITOCHONDRIAL"/>
    <property type="match status" value="1"/>
</dbReference>
<dbReference type="Pfam" id="PF00466">
    <property type="entry name" value="Ribosomal_L10"/>
    <property type="match status" value="1"/>
</dbReference>
<dbReference type="SUPFAM" id="SSF160369">
    <property type="entry name" value="Ribosomal protein L10-like"/>
    <property type="match status" value="1"/>
</dbReference>
<dbReference type="PROSITE" id="PS01109">
    <property type="entry name" value="RIBOSOMAL_L10"/>
    <property type="match status" value="1"/>
</dbReference>
<comment type="function">
    <text evidence="1">Forms part of the ribosomal stalk, playing a central role in the interaction of the ribosome with GTP-bound translation factors.</text>
</comment>
<comment type="subunit">
    <text evidence="1">Part of the ribosomal stalk of the 50S ribosomal subunit. The N-terminus interacts with L11 and the large rRNA to form the base of the stalk. The C-terminus forms an elongated spine to which L12 dimers bind in a sequential fashion forming a multimeric L10(L12)X complex.</text>
</comment>
<comment type="similarity">
    <text evidence="1">Belongs to the universal ribosomal protein uL10 family.</text>
</comment>